<gene>
    <name evidence="1" type="primary">ispG</name>
    <name type="ordered locus">PERMA_1514</name>
</gene>
<sequence length="352" mass="38327">MIKRRKTREIDVGGVKIGGDNPVVVQSMTDTKTHNIEETLSQIKRLADAGCEIIRVAVPTEKDAEALKEIVKRSPIPVIADIHFSPRIAFTALESGIHGIRLNPGNINDEGKIREILQECKKKNITVRLGVNSGSLEMGILEKYGFPSGEALAESALNWSEFFEKVGFTKFKVSIKGSDVLQNIEANKIFAEKTDIPLHIGITEAGPAGRGSVKSAVGLGILLYMGIGDTVRVSLTADPEEEVKVAYQILQSLGLRRRGIEIVSCPTCGRIEVNLPEVVRKVEEKLDGKNIPIKVAIMGCVVNAIGEAREADIGLACGNKSAILFKKGEPVKRVSEDQMIDQLLKEIDNLEI</sequence>
<evidence type="ECO:0000255" key="1">
    <source>
        <dbReference type="HAMAP-Rule" id="MF_00159"/>
    </source>
</evidence>
<reference key="1">
    <citation type="journal article" date="2009" name="J. Bacteriol.">
        <title>Complete and draft genome sequences of six members of the Aquificales.</title>
        <authorList>
            <person name="Reysenbach A.-L."/>
            <person name="Hamamura N."/>
            <person name="Podar M."/>
            <person name="Griffiths E."/>
            <person name="Ferreira S."/>
            <person name="Hochstein R."/>
            <person name="Heidelberg J."/>
            <person name="Johnson J."/>
            <person name="Mead D."/>
            <person name="Pohorille A."/>
            <person name="Sarmiento M."/>
            <person name="Schweighofer K."/>
            <person name="Seshadri R."/>
            <person name="Voytek M.A."/>
        </authorList>
    </citation>
    <scope>NUCLEOTIDE SEQUENCE [LARGE SCALE GENOMIC DNA]</scope>
    <source>
        <strain>DSM 14350 / EX-H1</strain>
    </source>
</reference>
<protein>
    <recommendedName>
        <fullName evidence="1">4-hydroxy-3-methylbut-2-en-1-yl diphosphate synthase (flavodoxin)</fullName>
        <ecNumber evidence="1">1.17.7.3</ecNumber>
    </recommendedName>
    <alternativeName>
        <fullName evidence="1">1-hydroxy-2-methyl-2-(E)-butenyl 4-diphosphate synthase</fullName>
    </alternativeName>
</protein>
<dbReference type="EC" id="1.17.7.3" evidence="1"/>
<dbReference type="EMBL" id="CP001230">
    <property type="protein sequence ID" value="ACO03666.1"/>
    <property type="molecule type" value="Genomic_DNA"/>
</dbReference>
<dbReference type="RefSeq" id="WP_012675905.1">
    <property type="nucleotide sequence ID" value="NC_012440.1"/>
</dbReference>
<dbReference type="SMR" id="C0QRI5"/>
<dbReference type="STRING" id="123214.PERMA_1514"/>
<dbReference type="PaxDb" id="123214-PERMA_1514"/>
<dbReference type="KEGG" id="pmx:PERMA_1514"/>
<dbReference type="eggNOG" id="COG0821">
    <property type="taxonomic scope" value="Bacteria"/>
</dbReference>
<dbReference type="HOGENOM" id="CLU_042258_0_0_0"/>
<dbReference type="OrthoDB" id="9803214at2"/>
<dbReference type="UniPathway" id="UPA00056">
    <property type="reaction ID" value="UER00096"/>
</dbReference>
<dbReference type="Proteomes" id="UP000001366">
    <property type="component" value="Chromosome"/>
</dbReference>
<dbReference type="GO" id="GO:0051539">
    <property type="term" value="F:4 iron, 4 sulfur cluster binding"/>
    <property type="evidence" value="ECO:0007669"/>
    <property type="project" value="UniProtKB-UniRule"/>
</dbReference>
<dbReference type="GO" id="GO:0046429">
    <property type="term" value="F:4-hydroxy-3-methylbut-2-en-1-yl diphosphate synthase activity (ferredoxin)"/>
    <property type="evidence" value="ECO:0007669"/>
    <property type="project" value="UniProtKB-UniRule"/>
</dbReference>
<dbReference type="GO" id="GO:0141197">
    <property type="term" value="F:4-hydroxy-3-methylbut-2-enyl-diphosphate synthase activity (flavodoxin)"/>
    <property type="evidence" value="ECO:0007669"/>
    <property type="project" value="UniProtKB-EC"/>
</dbReference>
<dbReference type="GO" id="GO:0005506">
    <property type="term" value="F:iron ion binding"/>
    <property type="evidence" value="ECO:0007669"/>
    <property type="project" value="InterPro"/>
</dbReference>
<dbReference type="GO" id="GO:0019288">
    <property type="term" value="P:isopentenyl diphosphate biosynthetic process, methylerythritol 4-phosphate pathway"/>
    <property type="evidence" value="ECO:0007669"/>
    <property type="project" value="UniProtKB-UniRule"/>
</dbReference>
<dbReference type="GO" id="GO:0016114">
    <property type="term" value="P:terpenoid biosynthetic process"/>
    <property type="evidence" value="ECO:0007669"/>
    <property type="project" value="InterPro"/>
</dbReference>
<dbReference type="FunFam" id="3.20.20.20:FF:000001">
    <property type="entry name" value="4-hydroxy-3-methylbut-2-en-1-yl diphosphate synthase (flavodoxin)"/>
    <property type="match status" value="1"/>
</dbReference>
<dbReference type="Gene3D" id="3.20.20.20">
    <property type="entry name" value="Dihydropteroate synthase-like"/>
    <property type="match status" value="1"/>
</dbReference>
<dbReference type="Gene3D" id="3.30.413.10">
    <property type="entry name" value="Sulfite Reductase Hemoprotein, domain 1"/>
    <property type="match status" value="1"/>
</dbReference>
<dbReference type="HAMAP" id="MF_00159">
    <property type="entry name" value="IspG"/>
    <property type="match status" value="1"/>
</dbReference>
<dbReference type="InterPro" id="IPR011005">
    <property type="entry name" value="Dihydropteroate_synth-like_sf"/>
</dbReference>
<dbReference type="InterPro" id="IPR036849">
    <property type="entry name" value="Enolase-like_C_sf"/>
</dbReference>
<dbReference type="InterPro" id="IPR016425">
    <property type="entry name" value="IspG_bac"/>
</dbReference>
<dbReference type="InterPro" id="IPR004588">
    <property type="entry name" value="IspG_bac-typ"/>
</dbReference>
<dbReference type="InterPro" id="IPR045854">
    <property type="entry name" value="NO2/SO3_Rdtase_4Fe4S_sf"/>
</dbReference>
<dbReference type="NCBIfam" id="TIGR00612">
    <property type="entry name" value="ispG_gcpE"/>
    <property type="match status" value="1"/>
</dbReference>
<dbReference type="NCBIfam" id="NF001540">
    <property type="entry name" value="PRK00366.1"/>
    <property type="match status" value="1"/>
</dbReference>
<dbReference type="PANTHER" id="PTHR30454">
    <property type="entry name" value="4-HYDROXY-3-METHYLBUT-2-EN-1-YL DIPHOSPHATE SYNTHASE"/>
    <property type="match status" value="1"/>
</dbReference>
<dbReference type="PANTHER" id="PTHR30454:SF0">
    <property type="entry name" value="4-HYDROXY-3-METHYLBUT-2-EN-1-YL DIPHOSPHATE SYNTHASE (FERREDOXIN), CHLOROPLASTIC"/>
    <property type="match status" value="1"/>
</dbReference>
<dbReference type="Pfam" id="PF04551">
    <property type="entry name" value="GcpE"/>
    <property type="match status" value="1"/>
</dbReference>
<dbReference type="PIRSF" id="PIRSF004640">
    <property type="entry name" value="IspG"/>
    <property type="match status" value="1"/>
</dbReference>
<dbReference type="SUPFAM" id="SSF51604">
    <property type="entry name" value="Enolase C-terminal domain-like"/>
    <property type="match status" value="1"/>
</dbReference>
<dbReference type="SUPFAM" id="SSF56014">
    <property type="entry name" value="Nitrite and sulphite reductase 4Fe-4S domain-like"/>
    <property type="match status" value="1"/>
</dbReference>
<comment type="function">
    <text evidence="1">Converts 2C-methyl-D-erythritol 2,4-cyclodiphosphate (ME-2,4cPP) into 1-hydroxy-2-methyl-2-(E)-butenyl 4-diphosphate.</text>
</comment>
<comment type="catalytic activity">
    <reaction evidence="1">
        <text>(2E)-4-hydroxy-3-methylbut-2-enyl diphosphate + oxidized [flavodoxin] + H2O + 2 H(+) = 2-C-methyl-D-erythritol 2,4-cyclic diphosphate + reduced [flavodoxin]</text>
        <dbReference type="Rhea" id="RHEA:43604"/>
        <dbReference type="Rhea" id="RHEA-COMP:10622"/>
        <dbReference type="Rhea" id="RHEA-COMP:10623"/>
        <dbReference type="ChEBI" id="CHEBI:15377"/>
        <dbReference type="ChEBI" id="CHEBI:15378"/>
        <dbReference type="ChEBI" id="CHEBI:57618"/>
        <dbReference type="ChEBI" id="CHEBI:58210"/>
        <dbReference type="ChEBI" id="CHEBI:58483"/>
        <dbReference type="ChEBI" id="CHEBI:128753"/>
        <dbReference type="EC" id="1.17.7.3"/>
    </reaction>
</comment>
<comment type="cofactor">
    <cofactor evidence="1">
        <name>[4Fe-4S] cluster</name>
        <dbReference type="ChEBI" id="CHEBI:49883"/>
    </cofactor>
    <text evidence="1">Binds 1 [4Fe-4S] cluster.</text>
</comment>
<comment type="pathway">
    <text evidence="1">Isoprenoid biosynthesis; isopentenyl diphosphate biosynthesis via DXP pathway; isopentenyl diphosphate from 1-deoxy-D-xylulose 5-phosphate: step 5/6.</text>
</comment>
<comment type="similarity">
    <text evidence="1">Belongs to the IspG family.</text>
</comment>
<name>ISPG_PERMH</name>
<feature type="chain" id="PRO_1000123456" description="4-hydroxy-3-methylbut-2-en-1-yl diphosphate synthase (flavodoxin)">
    <location>
        <begin position="1"/>
        <end position="352"/>
    </location>
</feature>
<feature type="binding site" evidence="1">
    <location>
        <position position="265"/>
    </location>
    <ligand>
        <name>[4Fe-4S] cluster</name>
        <dbReference type="ChEBI" id="CHEBI:49883"/>
    </ligand>
</feature>
<feature type="binding site" evidence="1">
    <location>
        <position position="268"/>
    </location>
    <ligand>
        <name>[4Fe-4S] cluster</name>
        <dbReference type="ChEBI" id="CHEBI:49883"/>
    </ligand>
</feature>
<feature type="binding site" evidence="1">
    <location>
        <position position="300"/>
    </location>
    <ligand>
        <name>[4Fe-4S] cluster</name>
        <dbReference type="ChEBI" id="CHEBI:49883"/>
    </ligand>
</feature>
<feature type="binding site" evidence="1">
    <location>
        <position position="307"/>
    </location>
    <ligand>
        <name>[4Fe-4S] cluster</name>
        <dbReference type="ChEBI" id="CHEBI:49883"/>
    </ligand>
</feature>
<organism>
    <name type="scientific">Persephonella marina (strain DSM 14350 / EX-H1)</name>
    <dbReference type="NCBI Taxonomy" id="123214"/>
    <lineage>
        <taxon>Bacteria</taxon>
        <taxon>Pseudomonadati</taxon>
        <taxon>Aquificota</taxon>
        <taxon>Aquificia</taxon>
        <taxon>Aquificales</taxon>
        <taxon>Hydrogenothermaceae</taxon>
        <taxon>Persephonella</taxon>
    </lineage>
</organism>
<keyword id="KW-0004">4Fe-4S</keyword>
<keyword id="KW-0408">Iron</keyword>
<keyword id="KW-0411">Iron-sulfur</keyword>
<keyword id="KW-0414">Isoprene biosynthesis</keyword>
<keyword id="KW-0479">Metal-binding</keyword>
<keyword id="KW-0560">Oxidoreductase</keyword>
<keyword id="KW-1185">Reference proteome</keyword>
<accession>C0QRI5</accession>
<proteinExistence type="inferred from homology"/>